<organism>
    <name type="scientific">Aliivibrio fischeri (strain MJ11)</name>
    <name type="common">Vibrio fischeri</name>
    <dbReference type="NCBI Taxonomy" id="388396"/>
    <lineage>
        <taxon>Bacteria</taxon>
        <taxon>Pseudomonadati</taxon>
        <taxon>Pseudomonadota</taxon>
        <taxon>Gammaproteobacteria</taxon>
        <taxon>Vibrionales</taxon>
        <taxon>Vibrionaceae</taxon>
        <taxon>Aliivibrio</taxon>
    </lineage>
</organism>
<keyword id="KW-0963">Cytoplasm</keyword>
<keyword id="KW-0460">Magnesium</keyword>
<keyword id="KW-0479">Metal-binding</keyword>
<keyword id="KW-0566">Pantothenate biosynthesis</keyword>
<keyword id="KW-0808">Transferase</keyword>
<gene>
    <name evidence="1" type="primary">panB</name>
    <name type="ordered locus">VFMJ11_2283</name>
</gene>
<comment type="function">
    <text evidence="1">Catalyzes the reversible reaction in which hydroxymethyl group from 5,10-methylenetetrahydrofolate is transferred onto alpha-ketoisovalerate to form ketopantoate.</text>
</comment>
<comment type="catalytic activity">
    <reaction evidence="1">
        <text>3-methyl-2-oxobutanoate + (6R)-5,10-methylene-5,6,7,8-tetrahydrofolate + H2O = 2-dehydropantoate + (6S)-5,6,7,8-tetrahydrofolate</text>
        <dbReference type="Rhea" id="RHEA:11824"/>
        <dbReference type="ChEBI" id="CHEBI:11561"/>
        <dbReference type="ChEBI" id="CHEBI:11851"/>
        <dbReference type="ChEBI" id="CHEBI:15377"/>
        <dbReference type="ChEBI" id="CHEBI:15636"/>
        <dbReference type="ChEBI" id="CHEBI:57453"/>
        <dbReference type="EC" id="2.1.2.11"/>
    </reaction>
</comment>
<comment type="cofactor">
    <cofactor evidence="1">
        <name>Mg(2+)</name>
        <dbReference type="ChEBI" id="CHEBI:18420"/>
    </cofactor>
    <text evidence="1">Binds 1 Mg(2+) ion per subunit.</text>
</comment>
<comment type="pathway">
    <text evidence="1">Cofactor biosynthesis; (R)-pantothenate biosynthesis; (R)-pantoate from 3-methyl-2-oxobutanoate: step 1/2.</text>
</comment>
<comment type="subunit">
    <text evidence="1">Homodecamer; pentamer of dimers.</text>
</comment>
<comment type="subcellular location">
    <subcellularLocation>
        <location evidence="1">Cytoplasm</location>
    </subcellularLocation>
</comment>
<comment type="similarity">
    <text evidence="1">Belongs to the PanB family.</text>
</comment>
<accession>B5FB05</accession>
<feature type="chain" id="PRO_1000097017" description="3-methyl-2-oxobutanoate hydroxymethyltransferase">
    <location>
        <begin position="1"/>
        <end position="264"/>
    </location>
</feature>
<feature type="active site" description="Proton acceptor" evidence="1">
    <location>
        <position position="181"/>
    </location>
</feature>
<feature type="binding site" evidence="1">
    <location>
        <begin position="45"/>
        <end position="46"/>
    </location>
    <ligand>
        <name>3-methyl-2-oxobutanoate</name>
        <dbReference type="ChEBI" id="CHEBI:11851"/>
    </ligand>
</feature>
<feature type="binding site" evidence="1">
    <location>
        <position position="45"/>
    </location>
    <ligand>
        <name>Mg(2+)</name>
        <dbReference type="ChEBI" id="CHEBI:18420"/>
    </ligand>
</feature>
<feature type="binding site" evidence="1">
    <location>
        <position position="84"/>
    </location>
    <ligand>
        <name>3-methyl-2-oxobutanoate</name>
        <dbReference type="ChEBI" id="CHEBI:11851"/>
    </ligand>
</feature>
<feature type="binding site" evidence="1">
    <location>
        <position position="84"/>
    </location>
    <ligand>
        <name>Mg(2+)</name>
        <dbReference type="ChEBI" id="CHEBI:18420"/>
    </ligand>
</feature>
<feature type="binding site" evidence="1">
    <location>
        <position position="112"/>
    </location>
    <ligand>
        <name>3-methyl-2-oxobutanoate</name>
        <dbReference type="ChEBI" id="CHEBI:11851"/>
    </ligand>
</feature>
<feature type="binding site" evidence="1">
    <location>
        <position position="114"/>
    </location>
    <ligand>
        <name>Mg(2+)</name>
        <dbReference type="ChEBI" id="CHEBI:18420"/>
    </ligand>
</feature>
<name>PANB_ALIFM</name>
<reference key="1">
    <citation type="submission" date="2008-08" db="EMBL/GenBank/DDBJ databases">
        <title>Complete sequence of Vibrio fischeri strain MJ11.</title>
        <authorList>
            <person name="Mandel M.J."/>
            <person name="Stabb E.V."/>
            <person name="Ruby E.G."/>
            <person name="Ferriera S."/>
            <person name="Johnson J."/>
            <person name="Kravitz S."/>
            <person name="Beeson K."/>
            <person name="Sutton G."/>
            <person name="Rogers Y.-H."/>
            <person name="Friedman R."/>
            <person name="Frazier M."/>
            <person name="Venter J.C."/>
        </authorList>
    </citation>
    <scope>NUCLEOTIDE SEQUENCE [LARGE SCALE GENOMIC DNA]</scope>
    <source>
        <strain>MJ11</strain>
    </source>
</reference>
<protein>
    <recommendedName>
        <fullName evidence="1">3-methyl-2-oxobutanoate hydroxymethyltransferase</fullName>
        <ecNumber evidence="1">2.1.2.11</ecNumber>
    </recommendedName>
    <alternativeName>
        <fullName evidence="1">Ketopantoate hydroxymethyltransferase</fullName>
        <shortName evidence="1">KPHMT</shortName>
    </alternativeName>
</protein>
<evidence type="ECO:0000255" key="1">
    <source>
        <dbReference type="HAMAP-Rule" id="MF_00156"/>
    </source>
</evidence>
<sequence length="264" mass="28619">MKKISIHDLMKWKQEGKKFATVTAYDASFAQLFEQQEVPVLLVGDSLGMVLQGKSDTLPVTTEEIAYHTRCVRAGSPNSLVMADMPFMSYATPEQACENAGKLMQAGANMVKIEGGEWIAETVRILAERAVPVCAHLGLTPQSVNIFGGFRIQGRDEAKAEQMVKDALTLEAAGAQIILLECVPASLAERITKACTVPVIGIGAGNATDGQILVMHDMFGISANYMPKFSKNFLAETGDMRKAVTKYIQDVEQGTFPAAEHTFN</sequence>
<proteinExistence type="inferred from homology"/>
<dbReference type="EC" id="2.1.2.11" evidence="1"/>
<dbReference type="EMBL" id="CP001139">
    <property type="protein sequence ID" value="ACH66243.1"/>
    <property type="molecule type" value="Genomic_DNA"/>
</dbReference>
<dbReference type="RefSeq" id="WP_012533595.1">
    <property type="nucleotide sequence ID" value="NC_011184.1"/>
</dbReference>
<dbReference type="SMR" id="B5FB05"/>
<dbReference type="KEGG" id="vfm:VFMJ11_2283"/>
<dbReference type="HOGENOM" id="CLU_036645_1_0_6"/>
<dbReference type="UniPathway" id="UPA00028">
    <property type="reaction ID" value="UER00003"/>
</dbReference>
<dbReference type="Proteomes" id="UP000001857">
    <property type="component" value="Chromosome I"/>
</dbReference>
<dbReference type="GO" id="GO:0005737">
    <property type="term" value="C:cytoplasm"/>
    <property type="evidence" value="ECO:0007669"/>
    <property type="project" value="UniProtKB-SubCell"/>
</dbReference>
<dbReference type="GO" id="GO:0003864">
    <property type="term" value="F:3-methyl-2-oxobutanoate hydroxymethyltransferase activity"/>
    <property type="evidence" value="ECO:0007669"/>
    <property type="project" value="UniProtKB-UniRule"/>
</dbReference>
<dbReference type="GO" id="GO:0000287">
    <property type="term" value="F:magnesium ion binding"/>
    <property type="evidence" value="ECO:0007669"/>
    <property type="project" value="TreeGrafter"/>
</dbReference>
<dbReference type="GO" id="GO:0015940">
    <property type="term" value="P:pantothenate biosynthetic process"/>
    <property type="evidence" value="ECO:0007669"/>
    <property type="project" value="UniProtKB-UniRule"/>
</dbReference>
<dbReference type="CDD" id="cd06557">
    <property type="entry name" value="KPHMT-like"/>
    <property type="match status" value="1"/>
</dbReference>
<dbReference type="FunFam" id="3.20.20.60:FF:000003">
    <property type="entry name" value="3-methyl-2-oxobutanoate hydroxymethyltransferase"/>
    <property type="match status" value="1"/>
</dbReference>
<dbReference type="Gene3D" id="3.20.20.60">
    <property type="entry name" value="Phosphoenolpyruvate-binding domains"/>
    <property type="match status" value="1"/>
</dbReference>
<dbReference type="HAMAP" id="MF_00156">
    <property type="entry name" value="PanB"/>
    <property type="match status" value="1"/>
</dbReference>
<dbReference type="InterPro" id="IPR003700">
    <property type="entry name" value="Pantoate_hydroxy_MeTrfase"/>
</dbReference>
<dbReference type="InterPro" id="IPR015813">
    <property type="entry name" value="Pyrv/PenolPyrv_kinase-like_dom"/>
</dbReference>
<dbReference type="InterPro" id="IPR040442">
    <property type="entry name" value="Pyrv_kinase-like_dom_sf"/>
</dbReference>
<dbReference type="NCBIfam" id="TIGR00222">
    <property type="entry name" value="panB"/>
    <property type="match status" value="1"/>
</dbReference>
<dbReference type="NCBIfam" id="NF001452">
    <property type="entry name" value="PRK00311.1"/>
    <property type="match status" value="1"/>
</dbReference>
<dbReference type="PANTHER" id="PTHR20881">
    <property type="entry name" value="3-METHYL-2-OXOBUTANOATE HYDROXYMETHYLTRANSFERASE"/>
    <property type="match status" value="1"/>
</dbReference>
<dbReference type="PANTHER" id="PTHR20881:SF0">
    <property type="entry name" value="3-METHYL-2-OXOBUTANOATE HYDROXYMETHYLTRANSFERASE"/>
    <property type="match status" value="1"/>
</dbReference>
<dbReference type="Pfam" id="PF02548">
    <property type="entry name" value="Pantoate_transf"/>
    <property type="match status" value="1"/>
</dbReference>
<dbReference type="PIRSF" id="PIRSF000388">
    <property type="entry name" value="Pantoate_hydroxy_MeTrfase"/>
    <property type="match status" value="1"/>
</dbReference>
<dbReference type="SUPFAM" id="SSF51621">
    <property type="entry name" value="Phosphoenolpyruvate/pyruvate domain"/>
    <property type="match status" value="1"/>
</dbReference>